<feature type="chain" id="PRO_0000455744" description="MFS-type transporter atr4">
    <location>
        <begin position="1"/>
        <end position="552"/>
    </location>
</feature>
<feature type="transmembrane region" description="Helical" evidence="1">
    <location>
        <begin position="118"/>
        <end position="138"/>
    </location>
</feature>
<feature type="transmembrane region" description="Helical" evidence="1">
    <location>
        <begin position="153"/>
        <end position="173"/>
    </location>
</feature>
<feature type="transmembrane region" description="Helical" evidence="1">
    <location>
        <begin position="182"/>
        <end position="202"/>
    </location>
</feature>
<feature type="transmembrane region" description="Helical" evidence="1">
    <location>
        <begin position="214"/>
        <end position="234"/>
    </location>
</feature>
<feature type="transmembrane region" description="Helical" evidence="1">
    <location>
        <begin position="244"/>
        <end position="264"/>
    </location>
</feature>
<feature type="transmembrane region" description="Helical" evidence="1">
    <location>
        <begin position="272"/>
        <end position="292"/>
    </location>
</feature>
<feature type="transmembrane region" description="Helical" evidence="1">
    <location>
        <begin position="346"/>
        <end position="366"/>
    </location>
</feature>
<feature type="transmembrane region" description="Helical" evidence="1">
    <location>
        <begin position="385"/>
        <end position="405"/>
    </location>
</feature>
<feature type="transmembrane region" description="Helical" evidence="1">
    <location>
        <begin position="425"/>
        <end position="445"/>
    </location>
</feature>
<feature type="transmembrane region" description="Helical" evidence="1">
    <location>
        <begin position="452"/>
        <end position="472"/>
    </location>
</feature>
<feature type="transmembrane region" description="Helical" evidence="1">
    <location>
        <begin position="498"/>
        <end position="518"/>
    </location>
</feature>
<feature type="transmembrane region" description="Helical" evidence="1">
    <location>
        <begin position="521"/>
        <end position="541"/>
    </location>
</feature>
<feature type="region of interest" description="Disordered" evidence="3">
    <location>
        <begin position="1"/>
        <end position="102"/>
    </location>
</feature>
<feature type="compositionally biased region" description="Low complexity" evidence="3">
    <location>
        <begin position="16"/>
        <end position="27"/>
    </location>
</feature>
<feature type="compositionally biased region" description="Polar residues" evidence="3">
    <location>
        <begin position="38"/>
        <end position="47"/>
    </location>
</feature>
<feature type="compositionally biased region" description="Polar residues" evidence="3">
    <location>
        <begin position="71"/>
        <end position="80"/>
    </location>
</feature>
<feature type="glycosylation site" description="N-linked (GlcNAc...) asparagine" evidence="2">
    <location>
        <position position="73"/>
    </location>
</feature>
<feature type="glycosylation site" description="N-linked (GlcNAc...) asparagine" evidence="2">
    <location>
        <position position="314"/>
    </location>
</feature>
<gene>
    <name evidence="5" type="primary">atr4</name>
</gene>
<accession>A0A8F4PNE5</accession>
<proteinExistence type="inferred from homology"/>
<protein>
    <recommendedName>
        <fullName evidence="5">MFS-type transporter atr4</fullName>
    </recommendedName>
    <alternativeName>
        <fullName evidence="5">Atranorin biosynthesis cluster protein 4</fullName>
    </alternativeName>
</protein>
<keyword id="KW-1003">Cell membrane</keyword>
<keyword id="KW-0325">Glycoprotein</keyword>
<keyword id="KW-0472">Membrane</keyword>
<keyword id="KW-0812">Transmembrane</keyword>
<keyword id="KW-1133">Transmembrane helix</keyword>
<keyword id="KW-0813">Transport</keyword>
<dbReference type="EMBL" id="MZ277876">
    <property type="protein sequence ID" value="QXF68950.1"/>
    <property type="molecule type" value="Genomic_DNA"/>
</dbReference>
<dbReference type="GlyCosmos" id="A0A8F4PNE5">
    <property type="glycosylation" value="2 sites, No reported glycans"/>
</dbReference>
<dbReference type="GO" id="GO:0005886">
    <property type="term" value="C:plasma membrane"/>
    <property type="evidence" value="ECO:0007669"/>
    <property type="project" value="UniProtKB-SubCell"/>
</dbReference>
<dbReference type="GO" id="GO:0022857">
    <property type="term" value="F:transmembrane transporter activity"/>
    <property type="evidence" value="ECO:0007669"/>
    <property type="project" value="InterPro"/>
</dbReference>
<dbReference type="CDD" id="cd17323">
    <property type="entry name" value="MFS_Tpo1_MDR_like"/>
    <property type="match status" value="1"/>
</dbReference>
<dbReference type="FunFam" id="1.20.1250.20:FF:000011">
    <property type="entry name" value="MFS multidrug transporter, putative"/>
    <property type="match status" value="1"/>
</dbReference>
<dbReference type="Gene3D" id="1.20.1250.20">
    <property type="entry name" value="MFS general substrate transporter like domains"/>
    <property type="match status" value="1"/>
</dbReference>
<dbReference type="InterPro" id="IPR011701">
    <property type="entry name" value="MFS"/>
</dbReference>
<dbReference type="InterPro" id="IPR020846">
    <property type="entry name" value="MFS_dom"/>
</dbReference>
<dbReference type="InterPro" id="IPR036259">
    <property type="entry name" value="MFS_trans_sf"/>
</dbReference>
<dbReference type="PANTHER" id="PTHR23502">
    <property type="entry name" value="MAJOR FACILITATOR SUPERFAMILY"/>
    <property type="match status" value="1"/>
</dbReference>
<dbReference type="PANTHER" id="PTHR23502:SF68">
    <property type="entry name" value="MULTIDRUG TRANSPORTER, PUTATIVE (AFU_ORTHOLOGUE AFUA_3G01120)-RELATED"/>
    <property type="match status" value="1"/>
</dbReference>
<dbReference type="Pfam" id="PF07690">
    <property type="entry name" value="MFS_1"/>
    <property type="match status" value="1"/>
</dbReference>
<dbReference type="SUPFAM" id="SSF103473">
    <property type="entry name" value="MFS general substrate transporter"/>
    <property type="match status" value="1"/>
</dbReference>
<dbReference type="PROSITE" id="PS50850">
    <property type="entry name" value="MFS"/>
    <property type="match status" value="1"/>
</dbReference>
<comment type="function">
    <text evidence="4">MFS-type transporter; part of the gene cluster that mediates the biosynthesis of atranorin, a depside of polyketide origin that accumulates in the cortical or medullary layers of lichen thalli.</text>
</comment>
<comment type="subcellular location">
    <subcellularLocation>
        <location evidence="6">Cell membrane</location>
        <topology evidence="1">Multi-pass membrane protein</topology>
    </subcellularLocation>
</comment>
<comment type="similarity">
    <text evidence="6">Belongs to the major facilitator superfamily.</text>
</comment>
<name>ATR4_STEAL</name>
<reference key="1">
    <citation type="journal article" date="2021" name="MBio">
        <title>Linking a gene cluster to atranorin, a major cortical substance of lichens, through genetic dereplication and heterologous expression.</title>
        <authorList>
            <person name="Kim W."/>
            <person name="Liu R."/>
            <person name="Woo S."/>
            <person name="Kang K.B."/>
            <person name="Park H."/>
            <person name="Yu Y.H."/>
            <person name="Ha H.H."/>
            <person name="Oh S.Y."/>
            <person name="Yang J.H."/>
            <person name="Kim H."/>
            <person name="Yun S.H."/>
            <person name="Hur J.S."/>
        </authorList>
    </citation>
    <scope>NUCLEOTIDE SEQUENCE [GENOMIC DNA]</scope>
    <scope>FUNCTION</scope>
</reference>
<organism>
    <name type="scientific">Stereocaulon alpinum</name>
    <name type="common">Alpine snow lichen</name>
    <name type="synonym">Stereocaulon paschale var. alpinum</name>
    <dbReference type="NCBI Taxonomy" id="350623"/>
    <lineage>
        <taxon>Eukaryota</taxon>
        <taxon>Fungi</taxon>
        <taxon>Dikarya</taxon>
        <taxon>Ascomycota</taxon>
        <taxon>Pezizomycotina</taxon>
        <taxon>Lecanoromycetes</taxon>
        <taxon>OSLEUM clade</taxon>
        <taxon>Lecanoromycetidae</taxon>
        <taxon>Lecanorales</taxon>
        <taxon>Lecanorineae</taxon>
        <taxon>Stereocaulaceae</taxon>
        <taxon>Stereocaulon</taxon>
    </lineage>
</organism>
<evidence type="ECO:0000255" key="1"/>
<evidence type="ECO:0000255" key="2">
    <source>
        <dbReference type="PROSITE-ProRule" id="PRU00498"/>
    </source>
</evidence>
<evidence type="ECO:0000256" key="3">
    <source>
        <dbReference type="SAM" id="MobiDB-lite"/>
    </source>
</evidence>
<evidence type="ECO:0000269" key="4">
    <source>
    </source>
</evidence>
<evidence type="ECO:0000303" key="5">
    <source>
    </source>
</evidence>
<evidence type="ECO:0000305" key="6"/>
<sequence>MEDPKSLSAPLTAFNADTTTADETPAAQKKYEDDNGQKAGSESSENTKNSDHGDATEVNTPKSADLEANALRNSSVSRSNQEQEKSEEAIDPNIVDWDGPNDPSNPLNWPTWKIKTHIFLVSSITFISPLGSSILATGIPQILAEFRSTNAELGSLVVSVYLLGFAAGPLVIAPLSELYGRMPLYHICNILFAILTVGCALGPTLNSEIGLRFLQGCAGSAPLAIGGGTISDLIPQERRGKYMGIYALGPTLGPIFGPVAGGFLTGAKGWRWLMWLLLMIEGSVTLVNFVVMRETYGVVIMARKTRALQKQTGNMSLRSRYDQGLTTRRLWRNTLIRPAKMLVYSPIIFLLSLFMAMVYGYLYLLFTTFPVVFGEYYHFSIGITGLVYLGLGIGNIIGLVIFGVFSDKILLAKAASGELKPEYRLLPMVWTSFTVPIGLFIYGWSARYAVHWIVPIIGTVFFGIGLLVTLVCTLTYIVDAFTEYAASATAANAVMRSVVGATLPLAGPSMYQALGIGWGNSLLAFIALAGCPIPWVFYVYGERIRKSSKATY</sequence>